<accession>B2K5N7</accession>
<comment type="function">
    <text evidence="2">With S4 and S5 plays an important role in translational accuracy.</text>
</comment>
<comment type="function">
    <text evidence="2">Interacts with and stabilizes bases of the 16S rRNA that are involved in tRNA selection in the A site and with the mRNA backbone. Located at the interface of the 30S and 50S subunits, it traverses the body of the 30S subunit contacting proteins on the other side and probably holding the rRNA structure together. The combined cluster of proteins S8, S12 and S17 appears to hold together the shoulder and platform of the 30S subunit.</text>
</comment>
<comment type="subunit">
    <text evidence="2">Part of the 30S ribosomal subunit. Contacts proteins S8 and S17. May interact with IF1 in the 30S initiation complex.</text>
</comment>
<comment type="similarity">
    <text evidence="2">Belongs to the universal ribosomal protein uS12 family.</text>
</comment>
<organism>
    <name type="scientific">Yersinia pseudotuberculosis serotype IB (strain PB1/+)</name>
    <dbReference type="NCBI Taxonomy" id="502801"/>
    <lineage>
        <taxon>Bacteria</taxon>
        <taxon>Pseudomonadati</taxon>
        <taxon>Pseudomonadota</taxon>
        <taxon>Gammaproteobacteria</taxon>
        <taxon>Enterobacterales</taxon>
        <taxon>Yersiniaceae</taxon>
        <taxon>Yersinia</taxon>
    </lineage>
</organism>
<proteinExistence type="inferred from homology"/>
<name>RS12_YERPB</name>
<keyword id="KW-0488">Methylation</keyword>
<keyword id="KW-0687">Ribonucleoprotein</keyword>
<keyword id="KW-0689">Ribosomal protein</keyword>
<keyword id="KW-0694">RNA-binding</keyword>
<keyword id="KW-0699">rRNA-binding</keyword>
<keyword id="KW-0820">tRNA-binding</keyword>
<reference key="1">
    <citation type="submission" date="2008-04" db="EMBL/GenBank/DDBJ databases">
        <title>Complete sequence of Yersinia pseudotuberculosis PB1/+.</title>
        <authorList>
            <person name="Copeland A."/>
            <person name="Lucas S."/>
            <person name="Lapidus A."/>
            <person name="Glavina del Rio T."/>
            <person name="Dalin E."/>
            <person name="Tice H."/>
            <person name="Bruce D."/>
            <person name="Goodwin L."/>
            <person name="Pitluck S."/>
            <person name="Munk A.C."/>
            <person name="Brettin T."/>
            <person name="Detter J.C."/>
            <person name="Han C."/>
            <person name="Tapia R."/>
            <person name="Schmutz J."/>
            <person name="Larimer F."/>
            <person name="Land M."/>
            <person name="Hauser L."/>
            <person name="Challacombe J.F."/>
            <person name="Green L."/>
            <person name="Lindler L.E."/>
            <person name="Nikolich M.P."/>
            <person name="Richardson P."/>
        </authorList>
    </citation>
    <scope>NUCLEOTIDE SEQUENCE [LARGE SCALE GENOMIC DNA]</scope>
    <source>
        <strain>PB1/+</strain>
    </source>
</reference>
<gene>
    <name evidence="2" type="primary">rpsL</name>
    <name type="ordered locus">YPTS_3897</name>
</gene>
<evidence type="ECO:0000250" key="1"/>
<evidence type="ECO:0000255" key="2">
    <source>
        <dbReference type="HAMAP-Rule" id="MF_00403"/>
    </source>
</evidence>
<evidence type="ECO:0000305" key="3"/>
<protein>
    <recommendedName>
        <fullName evidence="2">Small ribosomal subunit protein uS12</fullName>
    </recommendedName>
    <alternativeName>
        <fullName evidence="3">30S ribosomal protein S12</fullName>
    </alternativeName>
</protein>
<dbReference type="EMBL" id="CP001048">
    <property type="protein sequence ID" value="ACC90846.1"/>
    <property type="molecule type" value="Genomic_DNA"/>
</dbReference>
<dbReference type="RefSeq" id="WP_002212323.1">
    <property type="nucleotide sequence ID" value="NZ_CP009780.1"/>
</dbReference>
<dbReference type="SMR" id="B2K5N7"/>
<dbReference type="GeneID" id="97454224"/>
<dbReference type="KEGG" id="ypb:YPTS_3897"/>
<dbReference type="PATRIC" id="fig|502801.10.peg.3362"/>
<dbReference type="GO" id="GO:0015935">
    <property type="term" value="C:small ribosomal subunit"/>
    <property type="evidence" value="ECO:0007669"/>
    <property type="project" value="InterPro"/>
</dbReference>
<dbReference type="GO" id="GO:0019843">
    <property type="term" value="F:rRNA binding"/>
    <property type="evidence" value="ECO:0007669"/>
    <property type="project" value="UniProtKB-UniRule"/>
</dbReference>
<dbReference type="GO" id="GO:0003735">
    <property type="term" value="F:structural constituent of ribosome"/>
    <property type="evidence" value="ECO:0007669"/>
    <property type="project" value="InterPro"/>
</dbReference>
<dbReference type="GO" id="GO:0000049">
    <property type="term" value="F:tRNA binding"/>
    <property type="evidence" value="ECO:0007669"/>
    <property type="project" value="UniProtKB-UniRule"/>
</dbReference>
<dbReference type="GO" id="GO:0006412">
    <property type="term" value="P:translation"/>
    <property type="evidence" value="ECO:0007669"/>
    <property type="project" value="UniProtKB-UniRule"/>
</dbReference>
<dbReference type="CDD" id="cd03368">
    <property type="entry name" value="Ribosomal_S12"/>
    <property type="match status" value="1"/>
</dbReference>
<dbReference type="FunFam" id="2.40.50.140:FF:000001">
    <property type="entry name" value="30S ribosomal protein S12"/>
    <property type="match status" value="1"/>
</dbReference>
<dbReference type="Gene3D" id="2.40.50.140">
    <property type="entry name" value="Nucleic acid-binding proteins"/>
    <property type="match status" value="1"/>
</dbReference>
<dbReference type="HAMAP" id="MF_00403_B">
    <property type="entry name" value="Ribosomal_uS12_B"/>
    <property type="match status" value="1"/>
</dbReference>
<dbReference type="InterPro" id="IPR012340">
    <property type="entry name" value="NA-bd_OB-fold"/>
</dbReference>
<dbReference type="InterPro" id="IPR006032">
    <property type="entry name" value="Ribosomal_uS12"/>
</dbReference>
<dbReference type="InterPro" id="IPR005679">
    <property type="entry name" value="Ribosomal_uS12_bac"/>
</dbReference>
<dbReference type="NCBIfam" id="TIGR00981">
    <property type="entry name" value="rpsL_bact"/>
    <property type="match status" value="1"/>
</dbReference>
<dbReference type="PANTHER" id="PTHR11652">
    <property type="entry name" value="30S RIBOSOMAL PROTEIN S12 FAMILY MEMBER"/>
    <property type="match status" value="1"/>
</dbReference>
<dbReference type="Pfam" id="PF00164">
    <property type="entry name" value="Ribosom_S12_S23"/>
    <property type="match status" value="1"/>
</dbReference>
<dbReference type="PIRSF" id="PIRSF002133">
    <property type="entry name" value="Ribosomal_S12/S23"/>
    <property type="match status" value="1"/>
</dbReference>
<dbReference type="PRINTS" id="PR01034">
    <property type="entry name" value="RIBOSOMALS12"/>
</dbReference>
<dbReference type="SUPFAM" id="SSF50249">
    <property type="entry name" value="Nucleic acid-binding proteins"/>
    <property type="match status" value="1"/>
</dbReference>
<dbReference type="PROSITE" id="PS00055">
    <property type="entry name" value="RIBOSOMAL_S12"/>
    <property type="match status" value="1"/>
</dbReference>
<feature type="chain" id="PRO_1000123541" description="Small ribosomal subunit protein uS12">
    <location>
        <begin position="1"/>
        <end position="124"/>
    </location>
</feature>
<feature type="modified residue" description="3-methylthioaspartic acid" evidence="1">
    <location>
        <position position="89"/>
    </location>
</feature>
<sequence length="124" mass="13730">MATINQLVRKPRSMKVAKSNVPALEACPQKRGVCTRVYTTTPKKPNSALRKVCRVRLTNGFEVTSYIGGEGHNLQEHSVILIRGGRVKDLPGVRYHTVRGALDCSGVKDRKQSRSKYGVKKPKA</sequence>